<evidence type="ECO:0000250" key="1">
    <source>
        <dbReference type="UniProtKB" id="Q9N623"/>
    </source>
</evidence>
<evidence type="ECO:0000255" key="2"/>
<evidence type="ECO:0000305" key="3"/>
<feature type="chain" id="PRO_0000385363" description="Crt homolog 1">
    <location>
        <begin position="1"/>
        <end position="473"/>
    </location>
</feature>
<feature type="topological domain" description="Cytoplasmic" evidence="3">
    <location>
        <begin position="1"/>
        <end position="49"/>
    </location>
</feature>
<feature type="transmembrane region" description="Helical" evidence="2">
    <location>
        <begin position="50"/>
        <end position="70"/>
    </location>
</feature>
<feature type="topological domain" description="Vacuolar" evidence="3">
    <location>
        <begin position="71"/>
        <end position="80"/>
    </location>
</feature>
<feature type="transmembrane region" description="Helical" evidence="2">
    <location>
        <begin position="81"/>
        <end position="101"/>
    </location>
</feature>
<feature type="topological domain" description="Cytoplasmic" evidence="3">
    <location>
        <begin position="102"/>
        <end position="121"/>
    </location>
</feature>
<feature type="transmembrane region" description="Helical" evidence="2">
    <location>
        <begin position="122"/>
        <end position="142"/>
    </location>
</feature>
<feature type="topological domain" description="Vacuolar" evidence="3">
    <location>
        <begin position="143"/>
        <end position="146"/>
    </location>
</feature>
<feature type="transmembrane region" description="Helical" evidence="2">
    <location>
        <begin position="147"/>
        <end position="167"/>
    </location>
</feature>
<feature type="topological domain" description="Cytoplasmic" evidence="3">
    <location>
        <begin position="168"/>
        <end position="175"/>
    </location>
</feature>
<feature type="transmembrane region" description="Helical" evidence="2">
    <location>
        <begin position="176"/>
        <end position="196"/>
    </location>
</feature>
<feature type="topological domain" description="Vacuolar" evidence="3">
    <location>
        <begin position="197"/>
        <end position="207"/>
    </location>
</feature>
<feature type="transmembrane region" description="Helical" evidence="2">
    <location>
        <begin position="208"/>
        <end position="228"/>
    </location>
</feature>
<feature type="topological domain" description="Cytoplasmic" evidence="3">
    <location>
        <begin position="229"/>
        <end position="248"/>
    </location>
</feature>
<feature type="transmembrane region" description="Helical" evidence="2">
    <location>
        <begin position="249"/>
        <end position="269"/>
    </location>
</feature>
<feature type="topological domain" description="Vacuolar" evidence="3">
    <location>
        <begin position="270"/>
        <end position="322"/>
    </location>
</feature>
<feature type="transmembrane region" description="Helical" evidence="2">
    <location>
        <begin position="323"/>
        <end position="343"/>
    </location>
</feature>
<feature type="topological domain" description="Cytoplasmic" evidence="3">
    <location>
        <begin position="344"/>
        <end position="352"/>
    </location>
</feature>
<feature type="transmembrane region" description="Helical" evidence="2">
    <location>
        <begin position="353"/>
        <end position="373"/>
    </location>
</feature>
<feature type="topological domain" description="Vacuolar" evidence="3">
    <location>
        <position position="374"/>
    </location>
</feature>
<feature type="transmembrane region" description="Helical" evidence="2">
    <location>
        <begin position="375"/>
        <end position="395"/>
    </location>
</feature>
<feature type="topological domain" description="Cytoplasmic" evidence="3">
    <location>
        <begin position="396"/>
        <end position="473"/>
    </location>
</feature>
<feature type="glycosylation site" description="N-linked (GlcNAc...) asparagine" evidence="2">
    <location>
        <position position="295"/>
    </location>
</feature>
<comment type="function">
    <text evidence="1">Nutrient transporter (By similarity). Involved in maintaining the osmotic homeostasis of the digestive vacuole (By similarity).</text>
</comment>
<comment type="subcellular location">
    <subcellularLocation>
        <location evidence="1">Vacuole membrane</location>
        <topology evidence="2">Multi-pass membrane protein</topology>
    </subcellularLocation>
</comment>
<comment type="similarity">
    <text evidence="3">Belongs to the CRT-like transporter family.</text>
</comment>
<sequence>MTNNDKEKQPLLSSINNEDDNGATINIVEPVPWYSNIPQKIKNSMSKETITILIYVVLYVTSGVINSVLLKKVMNKFTNYAFFLSQLTNFGYVPIFGAVTAYKIFFTKDIPQETRDFPTRKFAIMGALDAITGFFVVIGGVSTSGPLQQLLNQAIIPFTMIASFIFLKERYSLIQLGGALVIIGGVVTSLIPSLLGGSSGGNKPFWNFFYLLSVIPGALSNVYKDIGFQAVADMDVWYLQYWDSLYQSIFGLFLFPVNNWLPPPATVKFEQILPFMKEGAECLAGINSIIPSYINGTSSFTATSCTYAPDATITCDDCHNAWIVIILYMTINIIYNIFILLVLKHAGATVYSIANTLRLPLTNIVFSIHFIMGSAVSPFSGLSVAGLVIILVGLGGYRVGSMIKQKKAAAAGGAIKVIPSYGPAGMDNIIPVQKEYIEPKSQAHLRNQFFGKLGINVPEARYRAANNNNYGDA</sequence>
<proteinExistence type="evidence at transcript level"/>
<name>CRTP1_DICDI</name>
<protein>
    <recommendedName>
        <fullName>Crt homolog 1</fullName>
    </recommendedName>
    <alternativeName>
        <fullName>Chloroquine resistance transporter paralog 1</fullName>
        <shortName>DdCRTp1</shortName>
    </alternativeName>
</protein>
<dbReference type="EMBL" id="AF317500">
    <property type="protein sequence ID" value="AAG31811.1"/>
    <property type="molecule type" value="mRNA"/>
</dbReference>
<dbReference type="EMBL" id="AAFI02000019">
    <property type="protein sequence ID" value="EAL68973.1"/>
    <property type="molecule type" value="Genomic_DNA"/>
</dbReference>
<dbReference type="RefSeq" id="XP_642959.1">
    <property type="nucleotide sequence ID" value="XM_637867.1"/>
</dbReference>
<dbReference type="SMR" id="Q9GSB0"/>
<dbReference type="FunCoup" id="Q9GSB0">
    <property type="interactions" value="2"/>
</dbReference>
<dbReference type="TCDB" id="2.A.7.20.2">
    <property type="family name" value="the drug/metabolite transporter (dmt) superfamily"/>
</dbReference>
<dbReference type="GlyCosmos" id="Q9GSB0">
    <property type="glycosylation" value="1 site, No reported glycans"/>
</dbReference>
<dbReference type="GlyGen" id="Q9GSB0">
    <property type="glycosylation" value="1 site"/>
</dbReference>
<dbReference type="PaxDb" id="44689-DDB0185065"/>
<dbReference type="EnsemblProtists" id="EAL68973">
    <property type="protein sequence ID" value="EAL68973"/>
    <property type="gene ID" value="DDB_G0276943"/>
</dbReference>
<dbReference type="GeneID" id="8620828"/>
<dbReference type="KEGG" id="ddi:DDB_G0276943"/>
<dbReference type="dictyBase" id="DDB_G0276943">
    <property type="gene designation" value="crtp1"/>
</dbReference>
<dbReference type="VEuPathDB" id="AmoebaDB:DDB_G0276943"/>
<dbReference type="eggNOG" id="ENOG502QR5M">
    <property type="taxonomic scope" value="Eukaryota"/>
</dbReference>
<dbReference type="HOGENOM" id="CLU_571661_0_0_1"/>
<dbReference type="InParanoid" id="Q9GSB0"/>
<dbReference type="OMA" id="FAYIIPM"/>
<dbReference type="PhylomeDB" id="Q9GSB0"/>
<dbReference type="PRO" id="PR:Q9GSB0"/>
<dbReference type="Proteomes" id="UP000002195">
    <property type="component" value="Chromosome 2"/>
</dbReference>
<dbReference type="GO" id="GO:0005774">
    <property type="term" value="C:vacuolar membrane"/>
    <property type="evidence" value="ECO:0007669"/>
    <property type="project" value="UniProtKB-SubCell"/>
</dbReference>
<dbReference type="GO" id="GO:0012506">
    <property type="term" value="C:vesicle membrane"/>
    <property type="evidence" value="ECO:0000314"/>
    <property type="project" value="dictyBase"/>
</dbReference>
<dbReference type="GO" id="GO:0042910">
    <property type="term" value="F:xenobiotic transmembrane transporter activity"/>
    <property type="evidence" value="ECO:0007669"/>
    <property type="project" value="InterPro"/>
</dbReference>
<dbReference type="GO" id="GO:0006865">
    <property type="term" value="P:amino acid transport"/>
    <property type="evidence" value="ECO:0007669"/>
    <property type="project" value="UniProtKB-KW"/>
</dbReference>
<dbReference type="InterPro" id="IPR013936">
    <property type="entry name" value="CRT-like"/>
</dbReference>
<dbReference type="InterPro" id="IPR017258">
    <property type="entry name" value="Transprt_Chloroquine"/>
</dbReference>
<dbReference type="PANTHER" id="PTHR31326">
    <property type="entry name" value="PROTEIN CLT2, CHLOROPLASTIC"/>
    <property type="match status" value="1"/>
</dbReference>
<dbReference type="PANTHER" id="PTHR31326:SF1">
    <property type="entry name" value="PROTEIN CLT2, CHLOROPLASTIC"/>
    <property type="match status" value="1"/>
</dbReference>
<dbReference type="Pfam" id="PF08627">
    <property type="entry name" value="CRT-like"/>
    <property type="match status" value="1"/>
</dbReference>
<dbReference type="PIRSF" id="PIRSF037671">
    <property type="entry name" value="Transprt_Chloroquine_res"/>
    <property type="match status" value="1"/>
</dbReference>
<dbReference type="SUPFAM" id="SSF103481">
    <property type="entry name" value="Multidrug resistance efflux transporter EmrE"/>
    <property type="match status" value="1"/>
</dbReference>
<keyword id="KW-0029">Amino-acid transport</keyword>
<keyword id="KW-0325">Glycoprotein</keyword>
<keyword id="KW-0472">Membrane</keyword>
<keyword id="KW-1185">Reference proteome</keyword>
<keyword id="KW-0812">Transmembrane</keyword>
<keyword id="KW-1133">Transmembrane helix</keyword>
<keyword id="KW-0813">Transport</keyword>
<keyword id="KW-0926">Vacuole</keyword>
<reference key="1">
    <citation type="journal article" date="2001" name="J. Infect. Dis.">
        <title>Evidence for different mechanisms of chloroquine resistance in 2 Plasmodium species that cause human malaria.</title>
        <authorList>
            <person name="Nomura T."/>
            <person name="Carlton J.M.-R."/>
            <person name="Baird J.K."/>
            <person name="del Portillo H.A."/>
            <person name="Fryauff D.J."/>
            <person name="Rathore D."/>
            <person name="Fidock D.A."/>
            <person name="Su X.-Z."/>
            <person name="Collins W.E."/>
            <person name="McCutchan T.F."/>
            <person name="Wootton J.C."/>
            <person name="Wellems T.E."/>
        </authorList>
    </citation>
    <scope>NUCLEOTIDE SEQUENCE [MRNA]</scope>
    <source>
        <strain>AX4</strain>
    </source>
</reference>
<reference key="2">
    <citation type="journal article" date="2002" name="Nature">
        <title>Sequence and analysis of chromosome 2 of Dictyostelium discoideum.</title>
        <authorList>
            <person name="Gloeckner G."/>
            <person name="Eichinger L."/>
            <person name="Szafranski K."/>
            <person name="Pachebat J.A."/>
            <person name="Bankier A.T."/>
            <person name="Dear P.H."/>
            <person name="Lehmann R."/>
            <person name="Baumgart C."/>
            <person name="Parra G."/>
            <person name="Abril J.F."/>
            <person name="Guigo R."/>
            <person name="Kumpf K."/>
            <person name="Tunggal B."/>
            <person name="Cox E.C."/>
            <person name="Quail M.A."/>
            <person name="Platzer M."/>
            <person name="Rosenthal A."/>
            <person name="Noegel A.A."/>
        </authorList>
    </citation>
    <scope>NUCLEOTIDE SEQUENCE [LARGE SCALE GENOMIC DNA]</scope>
    <source>
        <strain>AX4</strain>
    </source>
</reference>
<reference key="3">
    <citation type="journal article" date="2005" name="Nature">
        <title>The genome of the social amoeba Dictyostelium discoideum.</title>
        <authorList>
            <person name="Eichinger L."/>
            <person name="Pachebat J.A."/>
            <person name="Gloeckner G."/>
            <person name="Rajandream M.A."/>
            <person name="Sucgang R."/>
            <person name="Berriman M."/>
            <person name="Song J."/>
            <person name="Olsen R."/>
            <person name="Szafranski K."/>
            <person name="Xu Q."/>
            <person name="Tunggal B."/>
            <person name="Kummerfeld S."/>
            <person name="Madera M."/>
            <person name="Konfortov B.A."/>
            <person name="Rivero F."/>
            <person name="Bankier A.T."/>
            <person name="Lehmann R."/>
            <person name="Hamlin N."/>
            <person name="Davies R."/>
            <person name="Gaudet P."/>
            <person name="Fey P."/>
            <person name="Pilcher K."/>
            <person name="Chen G."/>
            <person name="Saunders D."/>
            <person name="Sodergren E.J."/>
            <person name="Davis P."/>
            <person name="Kerhornou A."/>
            <person name="Nie X."/>
            <person name="Hall N."/>
            <person name="Anjard C."/>
            <person name="Hemphill L."/>
            <person name="Bason N."/>
            <person name="Farbrother P."/>
            <person name="Desany B."/>
            <person name="Just E."/>
            <person name="Morio T."/>
            <person name="Rost R."/>
            <person name="Churcher C.M."/>
            <person name="Cooper J."/>
            <person name="Haydock S."/>
            <person name="van Driessche N."/>
            <person name="Cronin A."/>
            <person name="Goodhead I."/>
            <person name="Muzny D.M."/>
            <person name="Mourier T."/>
            <person name="Pain A."/>
            <person name="Lu M."/>
            <person name="Harper D."/>
            <person name="Lindsay R."/>
            <person name="Hauser H."/>
            <person name="James K.D."/>
            <person name="Quiles M."/>
            <person name="Madan Babu M."/>
            <person name="Saito T."/>
            <person name="Buchrieser C."/>
            <person name="Wardroper A."/>
            <person name="Felder M."/>
            <person name="Thangavelu M."/>
            <person name="Johnson D."/>
            <person name="Knights A."/>
            <person name="Loulseged H."/>
            <person name="Mungall K.L."/>
            <person name="Oliver K."/>
            <person name="Price C."/>
            <person name="Quail M.A."/>
            <person name="Urushihara H."/>
            <person name="Hernandez J."/>
            <person name="Rabbinowitsch E."/>
            <person name="Steffen D."/>
            <person name="Sanders M."/>
            <person name="Ma J."/>
            <person name="Kohara Y."/>
            <person name="Sharp S."/>
            <person name="Simmonds M.N."/>
            <person name="Spiegler S."/>
            <person name="Tivey A."/>
            <person name="Sugano S."/>
            <person name="White B."/>
            <person name="Walker D."/>
            <person name="Woodward J.R."/>
            <person name="Winckler T."/>
            <person name="Tanaka Y."/>
            <person name="Shaulsky G."/>
            <person name="Schleicher M."/>
            <person name="Weinstock G.M."/>
            <person name="Rosenthal A."/>
            <person name="Cox E.C."/>
            <person name="Chisholm R.L."/>
            <person name="Gibbs R.A."/>
            <person name="Loomis W.F."/>
            <person name="Platzer M."/>
            <person name="Kay R.R."/>
            <person name="Williams J.G."/>
            <person name="Dear P.H."/>
            <person name="Noegel A.A."/>
            <person name="Barrell B.G."/>
            <person name="Kuspa A."/>
        </authorList>
    </citation>
    <scope>NUCLEOTIDE SEQUENCE [LARGE SCALE GENOMIC DNA]</scope>
    <source>
        <strain>AX4</strain>
    </source>
</reference>
<reference key="4">
    <citation type="journal article" date="2005" name="J. Biol. Chem.">
        <title>Dictyostelium discoideum expresses a malaria chloroquine resistance mechanism upon transfection with mutant, but not wild-type, Plasmodium falciparum transporter PfCRT.</title>
        <authorList>
            <person name="Naude B."/>
            <person name="Brzostowski J.A."/>
            <person name="Kimmel A.R."/>
            <person name="Wellems T.E."/>
        </authorList>
    </citation>
    <scope>IDENTIFICATION</scope>
</reference>
<reference key="5">
    <citation type="journal article" date="2006" name="Mol. Biochem. Parasitol.">
        <title>Expression and function of pvcrt-o, a Plasmodium vivax ortholog of pfcrt, in Plasmodium falciparum and Dictyostelium discoideum.</title>
        <authorList>
            <person name="Sa J.M."/>
            <person name="Yamamoto M.M."/>
            <person name="Fernandez-Becerra C."/>
            <person name="de Azevedo M.F."/>
            <person name="Papakrivos J."/>
            <person name="Naude B."/>
            <person name="Wellems T.E."/>
            <person name="Del Portillo H.A."/>
        </authorList>
    </citation>
    <scope>IDENTIFICATION</scope>
</reference>
<gene>
    <name type="primary">crtp1</name>
    <name type="synonym">ssa662</name>
    <name type="ORF">DDB_G0276943</name>
</gene>
<accession>Q9GSB0</accession>
<accession>Q550H3</accession>
<organism>
    <name type="scientific">Dictyostelium discoideum</name>
    <name type="common">Social amoeba</name>
    <dbReference type="NCBI Taxonomy" id="44689"/>
    <lineage>
        <taxon>Eukaryota</taxon>
        <taxon>Amoebozoa</taxon>
        <taxon>Evosea</taxon>
        <taxon>Eumycetozoa</taxon>
        <taxon>Dictyostelia</taxon>
        <taxon>Dictyosteliales</taxon>
        <taxon>Dictyosteliaceae</taxon>
        <taxon>Dictyostelium</taxon>
    </lineage>
</organism>